<keyword id="KW-0472">Membrane</keyword>
<keyword id="KW-0675">Receptor</keyword>
<keyword id="KW-1185">Reference proteome</keyword>
<keyword id="KW-0812">Transmembrane</keyword>
<keyword id="KW-1133">Transmembrane helix</keyword>
<feature type="chain" id="PRO_0000104509" description="Serpentine receptor class delta-2">
    <location>
        <begin position="1"/>
        <end position="362"/>
    </location>
</feature>
<feature type="transmembrane region" description="Helical" evidence="1">
    <location>
        <begin position="27"/>
        <end position="47"/>
    </location>
</feature>
<feature type="transmembrane region" description="Helical" evidence="1">
    <location>
        <begin position="57"/>
        <end position="77"/>
    </location>
</feature>
<feature type="transmembrane region" description="Helical" evidence="1">
    <location>
        <begin position="104"/>
        <end position="124"/>
    </location>
</feature>
<feature type="transmembrane region" description="Helical" evidence="1">
    <location>
        <begin position="144"/>
        <end position="164"/>
    </location>
</feature>
<feature type="transmembrane region" description="Helical" evidence="1">
    <location>
        <begin position="209"/>
        <end position="229"/>
    </location>
</feature>
<feature type="transmembrane region" description="Helical" evidence="1">
    <location>
        <begin position="264"/>
        <end position="284"/>
    </location>
</feature>
<feature type="transmembrane region" description="Helical" evidence="1">
    <location>
        <begin position="292"/>
        <end position="312"/>
    </location>
</feature>
<evidence type="ECO:0000255" key="1"/>
<evidence type="ECO:0000269" key="2">
    <source>
    </source>
</evidence>
<evidence type="ECO:0000305" key="3"/>
<proteinExistence type="inferred from homology"/>
<name>SRD2_CAEEL</name>
<reference key="1">
    <citation type="journal article" date="1998" name="Science">
        <title>Genome sequence of the nematode C. elegans: a platform for investigating biology.</title>
        <authorList>
            <consortium name="The C. elegans sequencing consortium"/>
        </authorList>
    </citation>
    <scope>NUCLEOTIDE SEQUENCE [LARGE SCALE GENOMIC DNA]</scope>
    <source>
        <strain>Bristol N2</strain>
    </source>
</reference>
<reference key="2">
    <citation type="journal article" date="1995" name="Cell">
        <title>Divergent seven transmembrane receptors are candidate chemosensory receptors in C. elegans.</title>
        <authorList>
            <person name="Troemel E.R."/>
            <person name="Chou J.H."/>
            <person name="Dwyer N.D."/>
            <person name="Colbert H.A."/>
            <person name="Bargmann C.I."/>
        </authorList>
    </citation>
    <scope>FUNCTION</scope>
</reference>
<protein>
    <recommendedName>
        <fullName>Serpentine receptor class delta-2</fullName>
        <shortName>Protein srd-2</shortName>
    </recommendedName>
</protein>
<sequence>MNNTIQNSTITDDLKYVMTLDKLTEYLSCLICLPGALCNAILIYLIWKRTPIQMRSYAIYILNFALFDFATCIISFFSCQQVIFSDFSLVYIFHGPCKYVSPWFCYFCHCFMCHALAHSQWILLGSFIYRYRVLTGETPTAKDLIRNSVALYSMSLCFLLVYVFDNSDSDLLFQILTRVHPEYHYDDESIWKKSIVVSGNISAFAPITLISILYMTIPCVPIYCAILYFRHNTRVILNNPHINLSPTAKSNHVKLIRALTVQAGIPIFWLVASGIFTMSQFGIIGGPIPENITFRLMDCIPLISPIVTIIFVQPYREGLLKVLLKNSGLFVPNIIGSSIVDQTVAVTSVFGPKVTAFVQTQL</sequence>
<gene>
    <name type="primary">srd-2</name>
    <name type="ORF">R05H5.1</name>
</gene>
<dbReference type="EMBL" id="Z48795">
    <property type="protein sequence ID" value="CAA88731.2"/>
    <property type="molecule type" value="Genomic_DNA"/>
</dbReference>
<dbReference type="PIR" id="T23944">
    <property type="entry name" value="T23944"/>
</dbReference>
<dbReference type="RefSeq" id="NP_496196.2">
    <property type="nucleotide sequence ID" value="NM_063795.2"/>
</dbReference>
<dbReference type="FunCoup" id="Q21767">
    <property type="interactions" value="1"/>
</dbReference>
<dbReference type="PaxDb" id="6239-R05H5.1"/>
<dbReference type="EnsemblMetazoa" id="R05H5.1.1">
    <property type="protein sequence ID" value="R05H5.1.1"/>
    <property type="gene ID" value="WBGene00005080"/>
</dbReference>
<dbReference type="GeneID" id="191795"/>
<dbReference type="KEGG" id="cel:CELE_R05H5.1"/>
<dbReference type="UCSC" id="R05H5.1">
    <property type="organism name" value="c. elegans"/>
</dbReference>
<dbReference type="AGR" id="WB:WBGene00005080"/>
<dbReference type="CTD" id="191795"/>
<dbReference type="WormBase" id="R05H5.1">
    <property type="protein sequence ID" value="CE43249"/>
    <property type="gene ID" value="WBGene00005080"/>
    <property type="gene designation" value="srd-2"/>
</dbReference>
<dbReference type="eggNOG" id="ENOG502TGQW">
    <property type="taxonomic scope" value="Eukaryota"/>
</dbReference>
<dbReference type="GeneTree" id="ENSGT00970000195825"/>
<dbReference type="HOGENOM" id="CLU_057924_3_0_1"/>
<dbReference type="InParanoid" id="Q21767"/>
<dbReference type="OMA" id="CAILYFR"/>
<dbReference type="OrthoDB" id="5859769at2759"/>
<dbReference type="PhylomeDB" id="Q21767"/>
<dbReference type="PRO" id="PR:Q21767"/>
<dbReference type="Proteomes" id="UP000001940">
    <property type="component" value="Chromosome II"/>
</dbReference>
<dbReference type="GO" id="GO:0016020">
    <property type="term" value="C:membrane"/>
    <property type="evidence" value="ECO:0007669"/>
    <property type="project" value="UniProtKB-SubCell"/>
</dbReference>
<dbReference type="Gene3D" id="1.20.1070.10">
    <property type="entry name" value="Rhodopsin 7-helix transmembrane proteins"/>
    <property type="match status" value="1"/>
</dbReference>
<dbReference type="InterPro" id="IPR019421">
    <property type="entry name" value="7TM_GPCR_serpentine_rcpt_Srd"/>
</dbReference>
<dbReference type="InterPro" id="IPR050920">
    <property type="entry name" value="Nematode_rcpt-like_delta"/>
</dbReference>
<dbReference type="PANTHER" id="PTHR22945:SF27">
    <property type="entry name" value="SERPENTINE RECEPTOR CLASS DELTA-2"/>
    <property type="match status" value="1"/>
</dbReference>
<dbReference type="PANTHER" id="PTHR22945">
    <property type="entry name" value="SERPENTINE RECEPTOR, CLASS D DELTA"/>
    <property type="match status" value="1"/>
</dbReference>
<dbReference type="Pfam" id="PF10317">
    <property type="entry name" value="7TM_GPCR_Srd"/>
    <property type="match status" value="1"/>
</dbReference>
<dbReference type="SUPFAM" id="SSF81321">
    <property type="entry name" value="Family A G protein-coupled receptor-like"/>
    <property type="match status" value="1"/>
</dbReference>
<accession>Q21767</accession>
<comment type="function">
    <text evidence="2">Thought to be a chemosensory receptor.</text>
</comment>
<comment type="subcellular location">
    <subcellularLocation>
        <location evidence="3">Membrane</location>
        <topology evidence="3">Multi-pass membrane protein</topology>
    </subcellularLocation>
</comment>
<comment type="similarity">
    <text evidence="3">Belongs to the nematode receptor-like protein srd family.</text>
</comment>
<organism>
    <name type="scientific">Caenorhabditis elegans</name>
    <dbReference type="NCBI Taxonomy" id="6239"/>
    <lineage>
        <taxon>Eukaryota</taxon>
        <taxon>Metazoa</taxon>
        <taxon>Ecdysozoa</taxon>
        <taxon>Nematoda</taxon>
        <taxon>Chromadorea</taxon>
        <taxon>Rhabditida</taxon>
        <taxon>Rhabditina</taxon>
        <taxon>Rhabditomorpha</taxon>
        <taxon>Rhabditoidea</taxon>
        <taxon>Rhabditidae</taxon>
        <taxon>Peloderinae</taxon>
        <taxon>Caenorhabditis</taxon>
    </lineage>
</organism>